<comment type="function">
    <text evidence="1">Catalyzes carboxymethyl transfer from carboxy-S-adenosyl-L-methionine (Cx-SAM) to 5-hydroxyuridine (ho5U) to form 5-carboxymethoxyuridine (cmo5U) at position 34 in tRNAs.</text>
</comment>
<comment type="catalytic activity">
    <reaction evidence="1">
        <text>carboxy-S-adenosyl-L-methionine + 5-hydroxyuridine(34) in tRNA = 5-carboxymethoxyuridine(34) in tRNA + S-adenosyl-L-homocysteine + H(+)</text>
        <dbReference type="Rhea" id="RHEA:52848"/>
        <dbReference type="Rhea" id="RHEA-COMP:13381"/>
        <dbReference type="Rhea" id="RHEA-COMP:13383"/>
        <dbReference type="ChEBI" id="CHEBI:15378"/>
        <dbReference type="ChEBI" id="CHEBI:57856"/>
        <dbReference type="ChEBI" id="CHEBI:134278"/>
        <dbReference type="ChEBI" id="CHEBI:136877"/>
        <dbReference type="ChEBI" id="CHEBI:136879"/>
    </reaction>
</comment>
<comment type="subunit">
    <text evidence="1">Homotetramer.</text>
</comment>
<comment type="similarity">
    <text evidence="1">Belongs to the class I-like SAM-binding methyltransferase superfamily. CmoB family.</text>
</comment>
<feature type="chain" id="PRO_1000073620" description="tRNA U34 carboxymethyltransferase">
    <location>
        <begin position="1"/>
        <end position="323"/>
    </location>
</feature>
<feature type="binding site" evidence="1">
    <location>
        <position position="91"/>
    </location>
    <ligand>
        <name>carboxy-S-adenosyl-L-methionine</name>
        <dbReference type="ChEBI" id="CHEBI:134278"/>
    </ligand>
</feature>
<feature type="binding site" evidence="1">
    <location>
        <position position="105"/>
    </location>
    <ligand>
        <name>carboxy-S-adenosyl-L-methionine</name>
        <dbReference type="ChEBI" id="CHEBI:134278"/>
    </ligand>
</feature>
<feature type="binding site" evidence="1">
    <location>
        <position position="110"/>
    </location>
    <ligand>
        <name>carboxy-S-adenosyl-L-methionine</name>
        <dbReference type="ChEBI" id="CHEBI:134278"/>
    </ligand>
</feature>
<feature type="binding site" evidence="1">
    <location>
        <position position="130"/>
    </location>
    <ligand>
        <name>carboxy-S-adenosyl-L-methionine</name>
        <dbReference type="ChEBI" id="CHEBI:134278"/>
    </ligand>
</feature>
<feature type="binding site" evidence="1">
    <location>
        <begin position="152"/>
        <end position="154"/>
    </location>
    <ligand>
        <name>carboxy-S-adenosyl-L-methionine</name>
        <dbReference type="ChEBI" id="CHEBI:134278"/>
    </ligand>
</feature>
<feature type="binding site" evidence="1">
    <location>
        <begin position="181"/>
        <end position="182"/>
    </location>
    <ligand>
        <name>carboxy-S-adenosyl-L-methionine</name>
        <dbReference type="ChEBI" id="CHEBI:134278"/>
    </ligand>
</feature>
<feature type="binding site" evidence="1">
    <location>
        <position position="196"/>
    </location>
    <ligand>
        <name>carboxy-S-adenosyl-L-methionine</name>
        <dbReference type="ChEBI" id="CHEBI:134278"/>
    </ligand>
</feature>
<feature type="binding site" evidence="1">
    <location>
        <position position="200"/>
    </location>
    <ligand>
        <name>carboxy-S-adenosyl-L-methionine</name>
        <dbReference type="ChEBI" id="CHEBI:134278"/>
    </ligand>
</feature>
<feature type="binding site" evidence="1">
    <location>
        <position position="315"/>
    </location>
    <ligand>
        <name>carboxy-S-adenosyl-L-methionine</name>
        <dbReference type="ChEBI" id="CHEBI:134278"/>
    </ligand>
</feature>
<accession>A5F277</accession>
<accession>C3LZM3</accession>
<reference key="1">
    <citation type="submission" date="2007-03" db="EMBL/GenBank/DDBJ databases">
        <authorList>
            <person name="Heidelberg J."/>
        </authorList>
    </citation>
    <scope>NUCLEOTIDE SEQUENCE [LARGE SCALE GENOMIC DNA]</scope>
    <source>
        <strain>ATCC 39541 / Classical Ogawa 395 / O395</strain>
    </source>
</reference>
<reference key="2">
    <citation type="journal article" date="2008" name="PLoS ONE">
        <title>A recalibrated molecular clock and independent origins for the cholera pandemic clones.</title>
        <authorList>
            <person name="Feng L."/>
            <person name="Reeves P.R."/>
            <person name="Lan R."/>
            <person name="Ren Y."/>
            <person name="Gao C."/>
            <person name="Zhou Z."/>
            <person name="Ren Y."/>
            <person name="Cheng J."/>
            <person name="Wang W."/>
            <person name="Wang J."/>
            <person name="Qian W."/>
            <person name="Li D."/>
            <person name="Wang L."/>
        </authorList>
    </citation>
    <scope>NUCLEOTIDE SEQUENCE [LARGE SCALE GENOMIC DNA]</scope>
    <source>
        <strain>ATCC 39541 / Classical Ogawa 395 / O395</strain>
    </source>
</reference>
<proteinExistence type="inferred from homology"/>
<sequence>MFNFANVYQQIAQHPQLQLWLNTLPQQLTDWQAKQHGDLDRWMRNLKKIPVGQPEVIDLKNAVAAHNHQPLAQGEQKKLEAVLKTFHPWRKGPYHLHGIHIDTEWRSDWKWDRLLPHISPLKNRLVLDVGCGNGYHMWRMLGEGAQQVFGIDPSELFLIQFEAVRKLLGDDQRVHLLPLGIEQMPELNAFDTVFSMGVLYHRRSPLDHLLQLKNQLVAGGELILETLVVEGDEHTVLVPFDRYAQMRNVYFFPSALALKVWLEKTGFVDVRIVDENITSLGEQRTTEWMTHNSLPDYVDPQDPSKTIEGYPAPRRAILIAKKP</sequence>
<evidence type="ECO:0000255" key="1">
    <source>
        <dbReference type="HAMAP-Rule" id="MF_01590"/>
    </source>
</evidence>
<protein>
    <recommendedName>
        <fullName evidence="1">tRNA U34 carboxymethyltransferase</fullName>
        <ecNumber evidence="1">2.5.1.-</ecNumber>
    </recommendedName>
</protein>
<gene>
    <name evidence="1" type="primary">cmoB</name>
    <name type="ordered locus">VC0395_A0732</name>
    <name type="ordered locus">VC395_1229</name>
</gene>
<name>CMOB_VIBC3</name>
<keyword id="KW-0808">Transferase</keyword>
<keyword id="KW-0819">tRNA processing</keyword>
<dbReference type="EC" id="2.5.1.-" evidence="1"/>
<dbReference type="EMBL" id="CP000627">
    <property type="protein sequence ID" value="ABQ20386.1"/>
    <property type="molecule type" value="Genomic_DNA"/>
</dbReference>
<dbReference type="EMBL" id="CP001235">
    <property type="protein sequence ID" value="ACP09239.1"/>
    <property type="molecule type" value="Genomic_DNA"/>
</dbReference>
<dbReference type="RefSeq" id="WP_000481534.1">
    <property type="nucleotide sequence ID" value="NZ_JAACZH010000048.1"/>
</dbReference>
<dbReference type="SMR" id="A5F277"/>
<dbReference type="KEGG" id="vco:VC0395_A0732"/>
<dbReference type="KEGG" id="vcr:VC395_1229"/>
<dbReference type="PATRIC" id="fig|345073.21.peg.1196"/>
<dbReference type="eggNOG" id="COG0500">
    <property type="taxonomic scope" value="Bacteria"/>
</dbReference>
<dbReference type="HOGENOM" id="CLU_052665_0_0_6"/>
<dbReference type="OrthoDB" id="9773188at2"/>
<dbReference type="Proteomes" id="UP000000249">
    <property type="component" value="Chromosome 2"/>
</dbReference>
<dbReference type="GO" id="GO:0008168">
    <property type="term" value="F:methyltransferase activity"/>
    <property type="evidence" value="ECO:0007669"/>
    <property type="project" value="TreeGrafter"/>
</dbReference>
<dbReference type="GO" id="GO:0016765">
    <property type="term" value="F:transferase activity, transferring alkyl or aryl (other than methyl) groups"/>
    <property type="evidence" value="ECO:0007669"/>
    <property type="project" value="UniProtKB-UniRule"/>
</dbReference>
<dbReference type="GO" id="GO:0002098">
    <property type="term" value="P:tRNA wobble uridine modification"/>
    <property type="evidence" value="ECO:0007669"/>
    <property type="project" value="InterPro"/>
</dbReference>
<dbReference type="CDD" id="cd02440">
    <property type="entry name" value="AdoMet_MTases"/>
    <property type="match status" value="1"/>
</dbReference>
<dbReference type="Gene3D" id="3.40.50.150">
    <property type="entry name" value="Vaccinia Virus protein VP39"/>
    <property type="match status" value="1"/>
</dbReference>
<dbReference type="HAMAP" id="MF_01590">
    <property type="entry name" value="tRNA_carboxymethyltr_CmoB"/>
    <property type="match status" value="1"/>
</dbReference>
<dbReference type="InterPro" id="IPR010017">
    <property type="entry name" value="CmoB"/>
</dbReference>
<dbReference type="InterPro" id="IPR027555">
    <property type="entry name" value="Mo5U34_MeTrfas-like"/>
</dbReference>
<dbReference type="InterPro" id="IPR029063">
    <property type="entry name" value="SAM-dependent_MTases_sf"/>
</dbReference>
<dbReference type="NCBIfam" id="NF011650">
    <property type="entry name" value="PRK15068.1"/>
    <property type="match status" value="1"/>
</dbReference>
<dbReference type="NCBIfam" id="TIGR00452">
    <property type="entry name" value="tRNA 5-methoxyuridine(34)/uridine 5-oxyacetic acid(34) synthase CmoB"/>
    <property type="match status" value="1"/>
</dbReference>
<dbReference type="PANTHER" id="PTHR43464">
    <property type="entry name" value="METHYLTRANSFERASE"/>
    <property type="match status" value="1"/>
</dbReference>
<dbReference type="PANTHER" id="PTHR43464:SF95">
    <property type="entry name" value="TRNA U34 CARBOXYMETHYLTRANSFERASE"/>
    <property type="match status" value="1"/>
</dbReference>
<dbReference type="Pfam" id="PF08003">
    <property type="entry name" value="Methyltransf_9"/>
    <property type="match status" value="1"/>
</dbReference>
<dbReference type="SUPFAM" id="SSF53335">
    <property type="entry name" value="S-adenosyl-L-methionine-dependent methyltransferases"/>
    <property type="match status" value="1"/>
</dbReference>
<organism>
    <name type="scientific">Vibrio cholerae serotype O1 (strain ATCC 39541 / Classical Ogawa 395 / O395)</name>
    <dbReference type="NCBI Taxonomy" id="345073"/>
    <lineage>
        <taxon>Bacteria</taxon>
        <taxon>Pseudomonadati</taxon>
        <taxon>Pseudomonadota</taxon>
        <taxon>Gammaproteobacteria</taxon>
        <taxon>Vibrionales</taxon>
        <taxon>Vibrionaceae</taxon>
        <taxon>Vibrio</taxon>
    </lineage>
</organism>